<sequence length="554" mass="64124">MASSQVGDMVNGNAEPTRHLAKFPPSLWGDRFTSFTLDKQLWDKYGNEIEVLKEQVRSMVVAGGRKAAEQINLINVLERLGVSYHFEKEIEEQLEQLFAKFEDNEDYDLFTIALHFRIFRQHGYKMSCDVFNKFRDSNGEFKETVSNDVQGMLSLYEATYLKIRGEGFLDEAHAFTIAQLESLVGGPHLSSDLSEQVMHALKQSIHRGFPRLEAKHFISFYEKDASRNETLLRLAKLDFNQLQLSHREELCHIFRWWKELDLISKVPYARDRAVECFFWSTCAYYEPQHSVGRAVLTKIMLLLSVTDDTYDAYGTYDELKLYTNAVQRWDVSAMDELPDYMKALYRALLNVYDEVERDLAKQGRDYGVHHSKEAFKEIVRSYEIEAEWFKEGYVASFEEYMKNALVTSTGRLHTTSCFMGLEADVATTEAFEWILTKPKMVAASGAIGRLVDDVMSHDEEQERGHVATGLDCYMKQRGVSKQEAIVELYKMIENAWRDINEEMLKPTAISMKLLIRVLNLSRISDVVYKYVDGYTHPEIIKDHVISLFEDPIPM</sequence>
<gene>
    <name evidence="3" type="primary">TPS1A</name>
</gene>
<protein>
    <recommendedName>
        <fullName evidence="4">Valerianol synthase TPS1A</fullName>
        <ecNumber evidence="2">4.2.3.204</ecNumber>
    </recommendedName>
    <alternativeName>
        <fullName evidence="3">Terpene synthase 1</fullName>
        <shortName evidence="3">ChTPS1</shortName>
    </alternativeName>
    <alternativeName>
        <fullName evidence="3">Terpene synthase 1a</fullName>
        <shortName evidence="3">ChTps1a</shortName>
    </alternativeName>
</protein>
<accession>A0A348AUV5</accession>
<keyword id="KW-0456">Lyase</keyword>
<keyword id="KW-0460">Magnesium</keyword>
<keyword id="KW-0479">Metal-binding</keyword>
<name>TPS1A_CAMHI</name>
<organism>
    <name type="scientific">Camellia hiemalis</name>
    <name type="common">Camellia</name>
    <dbReference type="NCBI Taxonomy" id="1840584"/>
    <lineage>
        <taxon>Eukaryota</taxon>
        <taxon>Viridiplantae</taxon>
        <taxon>Streptophyta</taxon>
        <taxon>Embryophyta</taxon>
        <taxon>Tracheophyta</taxon>
        <taxon>Spermatophyta</taxon>
        <taxon>Magnoliopsida</taxon>
        <taxon>eudicotyledons</taxon>
        <taxon>Gunneridae</taxon>
        <taxon>Pentapetalae</taxon>
        <taxon>asterids</taxon>
        <taxon>Ericales</taxon>
        <taxon>Theaceae</taxon>
        <taxon>Camellia</taxon>
    </lineage>
</organism>
<proteinExistence type="evidence at protein level"/>
<reference key="1">
    <citation type="journal article" date="2018" name="Sci. Rep.">
        <title>Identification of novel sesquiterpene synthase genes that mediate the biosynthesis of valerianol, which was an unknown ingredient of tea.</title>
        <authorList>
            <person name="Hattan J."/>
            <person name="Shindo K."/>
            <person name="Sasaki T."/>
            <person name="Ohno F."/>
            <person name="Tokuda H."/>
            <person name="Ishikawa K."/>
            <person name="Misawa N."/>
        </authorList>
    </citation>
    <scope>NUCLEOTIDE SEQUENCE [MRNA]</scope>
    <scope>FUNCTION</scope>
    <scope>CATALYTIC ACTIVITY</scope>
    <scope>TISSUE SPECIFICITY</scope>
</reference>
<feature type="chain" id="PRO_0000451719" description="Valerianol synthase TPS1A">
    <location>
        <begin position="1"/>
        <end position="554"/>
    </location>
</feature>
<feature type="short sequence motif" description="DDXXD motif" evidence="4">
    <location>
        <begin position="326"/>
        <end position="330"/>
    </location>
</feature>
<feature type="binding site" evidence="1">
    <location>
        <position position="307"/>
    </location>
    <ligand>
        <name>Mg(2+)</name>
        <dbReference type="ChEBI" id="CHEBI:18420"/>
        <label>1</label>
    </ligand>
</feature>
<feature type="binding site" evidence="1">
    <location>
        <position position="307"/>
    </location>
    <ligand>
        <name>Mg(2+)</name>
        <dbReference type="ChEBI" id="CHEBI:18420"/>
        <label>2</label>
    </ligand>
</feature>
<feature type="binding site" evidence="1">
    <location>
        <position position="311"/>
    </location>
    <ligand>
        <name>Mg(2+)</name>
        <dbReference type="ChEBI" id="CHEBI:18420"/>
        <label>1</label>
    </ligand>
</feature>
<feature type="binding site" evidence="1">
    <location>
        <position position="311"/>
    </location>
    <ligand>
        <name>Mg(2+)</name>
        <dbReference type="ChEBI" id="CHEBI:18420"/>
        <label>2</label>
    </ligand>
</feature>
<feature type="binding site" evidence="1">
    <location>
        <position position="452"/>
    </location>
    <ligand>
        <name>Mg(2+)</name>
        <dbReference type="ChEBI" id="CHEBI:18420"/>
        <label>3</label>
    </ligand>
</feature>
<feature type="binding site" evidence="1">
    <location>
        <position position="456"/>
    </location>
    <ligand>
        <name>Mg(2+)</name>
        <dbReference type="ChEBI" id="CHEBI:18420"/>
        <label>3</label>
    </ligand>
</feature>
<feature type="binding site" evidence="1">
    <location>
        <position position="460"/>
    </location>
    <ligand>
        <name>Mg(2+)</name>
        <dbReference type="ChEBI" id="CHEBI:18420"/>
        <label>3</label>
    </ligand>
</feature>
<comment type="function">
    <text evidence="2">Terpene synthase that catalyzes the biosynthesis of the terpene valerianol, which is a volatile compound of floral scent.</text>
</comment>
<comment type="catalytic activity">
    <reaction evidence="2">
        <text>(2E,6E)-farnesyl diphosphate + H2O = valerianol + diphosphate</text>
        <dbReference type="Rhea" id="RHEA:60424"/>
        <dbReference type="ChEBI" id="CHEBI:15377"/>
        <dbReference type="ChEBI" id="CHEBI:33019"/>
        <dbReference type="ChEBI" id="CHEBI:143779"/>
        <dbReference type="ChEBI" id="CHEBI:175763"/>
        <dbReference type="EC" id="4.2.3.204"/>
    </reaction>
    <physiologicalReaction direction="left-to-right" evidence="2">
        <dbReference type="Rhea" id="RHEA:60425"/>
    </physiologicalReaction>
</comment>
<comment type="cofactor">
    <cofactor evidence="1">
        <name>Mg(2+)</name>
        <dbReference type="ChEBI" id="CHEBI:18420"/>
    </cofactor>
    <text evidence="1">Binds 3 Mg(2+) ions per subunit.</text>
</comment>
<comment type="pathway">
    <text evidence="4">Secondary metabolite biosynthesis; terpenoid biosynthesis.</text>
</comment>
<comment type="tissue specificity">
    <text evidence="2">Expressed in flowers.</text>
</comment>
<comment type="domain">
    <text evidence="4">The Asp-Asp-Xaa-Xaa-Asp/Glu (DDXXD/E) motif is important for the catalytic activity, presumably through binding to Mg(2+).</text>
</comment>
<comment type="similarity">
    <text evidence="4">Belongs to the terpene synthase family.</text>
</comment>
<dbReference type="EC" id="4.2.3.204" evidence="2"/>
<dbReference type="EMBL" id="LC212976">
    <property type="protein sequence ID" value="BBC44636.1"/>
    <property type="molecule type" value="mRNA"/>
</dbReference>
<dbReference type="SMR" id="A0A348AUV5"/>
<dbReference type="KEGG" id="ag:BBC44636"/>
<dbReference type="BioCyc" id="MetaCyc:MONOMER-20802"/>
<dbReference type="UniPathway" id="UPA00213"/>
<dbReference type="GO" id="GO:0016838">
    <property type="term" value="F:carbon-oxygen lyase activity, acting on phosphates"/>
    <property type="evidence" value="ECO:0000314"/>
    <property type="project" value="UniProtKB"/>
</dbReference>
<dbReference type="GO" id="GO:0000287">
    <property type="term" value="F:magnesium ion binding"/>
    <property type="evidence" value="ECO:0007669"/>
    <property type="project" value="InterPro"/>
</dbReference>
<dbReference type="GO" id="GO:0010333">
    <property type="term" value="F:terpene synthase activity"/>
    <property type="evidence" value="ECO:0007669"/>
    <property type="project" value="InterPro"/>
</dbReference>
<dbReference type="GO" id="GO:0016102">
    <property type="term" value="P:diterpenoid biosynthetic process"/>
    <property type="evidence" value="ECO:0007669"/>
    <property type="project" value="InterPro"/>
</dbReference>
<dbReference type="GO" id="GO:0016106">
    <property type="term" value="P:sesquiterpenoid biosynthetic process"/>
    <property type="evidence" value="ECO:0000314"/>
    <property type="project" value="UniProtKB"/>
</dbReference>
<dbReference type="CDD" id="cd00684">
    <property type="entry name" value="Terpene_cyclase_plant_C1"/>
    <property type="match status" value="1"/>
</dbReference>
<dbReference type="FunFam" id="1.10.600.10:FF:000007">
    <property type="entry name" value="Isoprene synthase, chloroplastic"/>
    <property type="match status" value="1"/>
</dbReference>
<dbReference type="FunFam" id="1.50.10.130:FF:000001">
    <property type="entry name" value="Isoprene synthase, chloroplastic"/>
    <property type="match status" value="1"/>
</dbReference>
<dbReference type="Gene3D" id="1.10.600.10">
    <property type="entry name" value="Farnesyl Diphosphate Synthase"/>
    <property type="match status" value="1"/>
</dbReference>
<dbReference type="Gene3D" id="1.50.10.130">
    <property type="entry name" value="Terpene synthase, N-terminal domain"/>
    <property type="match status" value="1"/>
</dbReference>
<dbReference type="InterPro" id="IPR008949">
    <property type="entry name" value="Isoprenoid_synthase_dom_sf"/>
</dbReference>
<dbReference type="InterPro" id="IPR034741">
    <property type="entry name" value="Terpene_cyclase-like_1_C"/>
</dbReference>
<dbReference type="InterPro" id="IPR044814">
    <property type="entry name" value="Terpene_cyclase_plant_C1"/>
</dbReference>
<dbReference type="InterPro" id="IPR001906">
    <property type="entry name" value="Terpene_synth_N"/>
</dbReference>
<dbReference type="InterPro" id="IPR036965">
    <property type="entry name" value="Terpene_synth_N_sf"/>
</dbReference>
<dbReference type="InterPro" id="IPR050148">
    <property type="entry name" value="Terpene_synthase-like"/>
</dbReference>
<dbReference type="InterPro" id="IPR005630">
    <property type="entry name" value="Terpene_synthase_metal-bd"/>
</dbReference>
<dbReference type="InterPro" id="IPR008930">
    <property type="entry name" value="Terpenoid_cyclase/PrenylTrfase"/>
</dbReference>
<dbReference type="PANTHER" id="PTHR31225:SF93">
    <property type="entry name" value="ALPHA-HUMULENE_(-)-(E)-BETA-CARYOPHYLLENE SYNTHASE"/>
    <property type="match status" value="1"/>
</dbReference>
<dbReference type="PANTHER" id="PTHR31225">
    <property type="entry name" value="OS04G0344100 PROTEIN-RELATED"/>
    <property type="match status" value="1"/>
</dbReference>
<dbReference type="Pfam" id="PF01397">
    <property type="entry name" value="Terpene_synth"/>
    <property type="match status" value="1"/>
</dbReference>
<dbReference type="Pfam" id="PF03936">
    <property type="entry name" value="Terpene_synth_C"/>
    <property type="match status" value="1"/>
</dbReference>
<dbReference type="SFLD" id="SFLDS00005">
    <property type="entry name" value="Isoprenoid_Synthase_Type_I"/>
    <property type="match status" value="1"/>
</dbReference>
<dbReference type="SFLD" id="SFLDG01019">
    <property type="entry name" value="Terpene_Cyclase_Like_1_C_Termi"/>
    <property type="match status" value="1"/>
</dbReference>
<dbReference type="SUPFAM" id="SSF48239">
    <property type="entry name" value="Terpenoid cyclases/Protein prenyltransferases"/>
    <property type="match status" value="1"/>
</dbReference>
<dbReference type="SUPFAM" id="SSF48576">
    <property type="entry name" value="Terpenoid synthases"/>
    <property type="match status" value="1"/>
</dbReference>
<evidence type="ECO:0000250" key="1">
    <source>
        <dbReference type="UniProtKB" id="Q40577"/>
    </source>
</evidence>
<evidence type="ECO:0000269" key="2">
    <source>
    </source>
</evidence>
<evidence type="ECO:0000303" key="3">
    <source>
    </source>
</evidence>
<evidence type="ECO:0000305" key="4"/>